<dbReference type="EMBL" id="BC111656">
    <property type="protein sequence ID" value="AAI11657.1"/>
    <property type="molecule type" value="mRNA"/>
</dbReference>
<dbReference type="RefSeq" id="NP_001071532.1">
    <property type="nucleotide sequence ID" value="NM_001078064.2"/>
</dbReference>
<dbReference type="RefSeq" id="XP_024851717.1">
    <property type="nucleotide sequence ID" value="XM_024995949.2"/>
</dbReference>
<dbReference type="SMR" id="Q2NKT2"/>
<dbReference type="FunCoup" id="Q2NKT2">
    <property type="interactions" value="2573"/>
</dbReference>
<dbReference type="STRING" id="9913.ENSBTAP00000025666"/>
<dbReference type="PaxDb" id="9913-ENSBTAP00000025666"/>
<dbReference type="GeneID" id="616784"/>
<dbReference type="KEGG" id="bta:616784"/>
<dbReference type="CTD" id="58493"/>
<dbReference type="VEuPathDB" id="HostDB:ENSBTAG00000019275"/>
<dbReference type="eggNOG" id="ENOG502S23S">
    <property type="taxonomic scope" value="Eukaryota"/>
</dbReference>
<dbReference type="HOGENOM" id="CLU_145773_1_0_1"/>
<dbReference type="InParanoid" id="Q2NKT2"/>
<dbReference type="OMA" id="QPLFQTY"/>
<dbReference type="OrthoDB" id="10040290at2759"/>
<dbReference type="TreeFam" id="TF328613"/>
<dbReference type="Proteomes" id="UP000009136">
    <property type="component" value="Chromosome 8"/>
</dbReference>
<dbReference type="Bgee" id="ENSBTAG00000019275">
    <property type="expression patterns" value="Expressed in oocyte and 112 other cell types or tissues"/>
</dbReference>
<dbReference type="GO" id="GO:0005654">
    <property type="term" value="C:nucleoplasm"/>
    <property type="evidence" value="ECO:0000318"/>
    <property type="project" value="GO_Central"/>
</dbReference>
<dbReference type="GO" id="GO:0005634">
    <property type="term" value="C:nucleus"/>
    <property type="evidence" value="ECO:0000250"/>
    <property type="project" value="UniProtKB"/>
</dbReference>
<dbReference type="GO" id="GO:0070876">
    <property type="term" value="C:SOSS complex"/>
    <property type="evidence" value="ECO:0000250"/>
    <property type="project" value="UniProtKB"/>
</dbReference>
<dbReference type="GO" id="GO:0006974">
    <property type="term" value="P:DNA damage response"/>
    <property type="evidence" value="ECO:0000250"/>
    <property type="project" value="UniProtKB"/>
</dbReference>
<dbReference type="GO" id="GO:0006281">
    <property type="term" value="P:DNA repair"/>
    <property type="evidence" value="ECO:0000250"/>
    <property type="project" value="UniProtKB"/>
</dbReference>
<dbReference type="GO" id="GO:0010212">
    <property type="term" value="P:response to ionizing radiation"/>
    <property type="evidence" value="ECO:0000250"/>
    <property type="project" value="UniProtKB"/>
</dbReference>
<dbReference type="InterPro" id="IPR031821">
    <property type="entry name" value="SOSSC"/>
</dbReference>
<dbReference type="PANTHER" id="PTHR31526">
    <property type="entry name" value="SOSS COMPLEX SUBUNIT C"/>
    <property type="match status" value="1"/>
</dbReference>
<dbReference type="PANTHER" id="PTHR31526:SF2">
    <property type="entry name" value="SOSS COMPLEX SUBUNIT C"/>
    <property type="match status" value="1"/>
</dbReference>
<dbReference type="Pfam" id="PF15925">
    <property type="entry name" value="SOSSC"/>
    <property type="match status" value="1"/>
</dbReference>
<protein>
    <recommendedName>
        <fullName>SOSS complex subunit C</fullName>
    </recommendedName>
    <alternativeName>
        <fullName>INTS3- and NABP-interacting protein</fullName>
    </alternativeName>
    <alternativeName>
        <fullName>Sensor of single-strand DNA complex subunit C</fullName>
    </alternativeName>
    <alternativeName>
        <fullName>Sensor of ssDNA subunit C</fullName>
        <shortName>SOSS-C</shortName>
    </alternativeName>
    <alternativeName>
        <fullName>Single-stranded DNA-binding protein-interacting protein 1</fullName>
        <shortName>SSB-interacting protein 1</shortName>
    </alternativeName>
</protein>
<name>SOSSC_BOVIN</name>
<feature type="initiator methionine" description="Removed" evidence="2">
    <location>
        <position position="1"/>
    </location>
</feature>
<feature type="chain" id="PRO_0000279418" description="SOSS complex subunit C">
    <location>
        <begin position="2"/>
        <end position="104"/>
    </location>
</feature>
<feature type="modified residue" description="N-acetylalanine" evidence="2">
    <location>
        <position position="2"/>
    </location>
</feature>
<sequence>MAANPSGQGFQNKNRVAILAELDKEKRKLLMQNQSSTNHPGASIALSRPALNKDFRDHAEQQHIAAQQKAALQHAHAHSSGYFITQDSAFGNLILPVLPRLDPE</sequence>
<evidence type="ECO:0000250" key="1"/>
<evidence type="ECO:0000250" key="2">
    <source>
        <dbReference type="UniProtKB" id="Q9NRY2"/>
    </source>
</evidence>
<evidence type="ECO:0000305" key="3"/>
<reference key="1">
    <citation type="submission" date="2006-01" db="EMBL/GenBank/DDBJ databases">
        <authorList>
            <consortium name="NIH - Mammalian Gene Collection (MGC) project"/>
        </authorList>
    </citation>
    <scope>NUCLEOTIDE SEQUENCE [LARGE SCALE MRNA]</scope>
    <source>
        <strain>Hereford</strain>
        <tissue>Testis</tissue>
    </source>
</reference>
<organism>
    <name type="scientific">Bos taurus</name>
    <name type="common">Bovine</name>
    <dbReference type="NCBI Taxonomy" id="9913"/>
    <lineage>
        <taxon>Eukaryota</taxon>
        <taxon>Metazoa</taxon>
        <taxon>Chordata</taxon>
        <taxon>Craniata</taxon>
        <taxon>Vertebrata</taxon>
        <taxon>Euteleostomi</taxon>
        <taxon>Mammalia</taxon>
        <taxon>Eutheria</taxon>
        <taxon>Laurasiatheria</taxon>
        <taxon>Artiodactyla</taxon>
        <taxon>Ruminantia</taxon>
        <taxon>Pecora</taxon>
        <taxon>Bovidae</taxon>
        <taxon>Bovinae</taxon>
        <taxon>Bos</taxon>
    </lineage>
</organism>
<gene>
    <name type="primary">INIP</name>
    <name type="synonym">SSBIP1</name>
</gene>
<proteinExistence type="inferred from homology"/>
<keyword id="KW-0007">Acetylation</keyword>
<keyword id="KW-0227">DNA damage</keyword>
<keyword id="KW-0234">DNA repair</keyword>
<keyword id="KW-0539">Nucleus</keyword>
<keyword id="KW-1185">Reference proteome</keyword>
<accession>Q2NKT2</accession>
<comment type="function">
    <text evidence="1">Component of the SOSS complex, a multiprotein complex that functions downstream of the MRN complex to promote DNA repair and G2/M checkpoint. The SOSS complex associates with single-stranded DNA at DNA lesions and influences diverse endpoints in the cellular DNA damage response including cell-cycle checkpoint activation, recombinational repair and maintenance of genomic stability. Required for efficient homologous recombination-dependent repair of double-strand breaks (DSBs) and ATM-dependent signaling pathways (By similarity).</text>
</comment>
<comment type="subunit">
    <text evidence="1">Component of the SOSS complex, composed of SOSS-B (SOSS-B1/NABP2 or SOSS-B2/NABP1), SOSS-A/INTS3 and SOSS-C/INIP. SOSS complexes containing SOSS-B1/NABP2 are more abundant than complexes containing SOSS-B2/NABP1. Interacts with INTS3; the interaction is direct (By similarity).</text>
</comment>
<comment type="subcellular location">
    <subcellularLocation>
        <location evidence="1">Nucleus</location>
    </subcellularLocation>
    <text evidence="1">Localizes to nuclear foci following DNA damage.</text>
</comment>
<comment type="similarity">
    <text evidence="3">Belongs to the SOSS-C family.</text>
</comment>